<organism>
    <name type="scientific">Buchnera aphidicola subsp. Acyrthosiphon pisum (strain Tuc7)</name>
    <dbReference type="NCBI Taxonomy" id="561501"/>
    <lineage>
        <taxon>Bacteria</taxon>
        <taxon>Pseudomonadati</taxon>
        <taxon>Pseudomonadota</taxon>
        <taxon>Gammaproteobacteria</taxon>
        <taxon>Enterobacterales</taxon>
        <taxon>Erwiniaceae</taxon>
        <taxon>Buchnera</taxon>
    </lineage>
</organism>
<evidence type="ECO:0000250" key="1"/>
<evidence type="ECO:0000255" key="2">
    <source>
        <dbReference type="HAMAP-Rule" id="MF_00100"/>
    </source>
</evidence>
<evidence type="ECO:0000256" key="3">
    <source>
        <dbReference type="SAM" id="MobiDB-lite"/>
    </source>
</evidence>
<feature type="chain" id="PRO_1000118753" description="Translation initiation factor IF-2">
    <location>
        <begin position="1"/>
        <end position="864"/>
    </location>
</feature>
<feature type="domain" description="tr-type G">
    <location>
        <begin position="364"/>
        <end position="533"/>
    </location>
</feature>
<feature type="region of interest" description="Disordered" evidence="3">
    <location>
        <begin position="140"/>
        <end position="179"/>
    </location>
</feature>
<feature type="region of interest" description="G1" evidence="1">
    <location>
        <begin position="373"/>
        <end position="380"/>
    </location>
</feature>
<feature type="region of interest" description="G2" evidence="1">
    <location>
        <begin position="398"/>
        <end position="402"/>
    </location>
</feature>
<feature type="region of interest" description="G3" evidence="1">
    <location>
        <begin position="419"/>
        <end position="422"/>
    </location>
</feature>
<feature type="region of interest" description="G4" evidence="1">
    <location>
        <begin position="473"/>
        <end position="476"/>
    </location>
</feature>
<feature type="region of interest" description="G5" evidence="1">
    <location>
        <begin position="509"/>
        <end position="511"/>
    </location>
</feature>
<feature type="compositionally biased region" description="Basic and acidic residues" evidence="3">
    <location>
        <begin position="140"/>
        <end position="171"/>
    </location>
</feature>
<feature type="binding site" evidence="2">
    <location>
        <begin position="373"/>
        <end position="380"/>
    </location>
    <ligand>
        <name>GTP</name>
        <dbReference type="ChEBI" id="CHEBI:37565"/>
    </ligand>
</feature>
<feature type="binding site" evidence="2">
    <location>
        <begin position="419"/>
        <end position="423"/>
    </location>
    <ligand>
        <name>GTP</name>
        <dbReference type="ChEBI" id="CHEBI:37565"/>
    </ligand>
</feature>
<feature type="binding site" evidence="2">
    <location>
        <begin position="473"/>
        <end position="476"/>
    </location>
    <ligand>
        <name>GTP</name>
        <dbReference type="ChEBI" id="CHEBI:37565"/>
    </ligand>
</feature>
<accession>B8D7R4</accession>
<reference key="1">
    <citation type="journal article" date="2009" name="Science">
        <title>The dynamics and time scale of ongoing genomic erosion in symbiotic bacteria.</title>
        <authorList>
            <person name="Moran N.A."/>
            <person name="McLaughlin H.J."/>
            <person name="Sorek R."/>
        </authorList>
    </citation>
    <scope>NUCLEOTIDE SEQUENCE [LARGE SCALE GENOMIC DNA]</scope>
    <source>
        <strain>Tuc7</strain>
    </source>
</reference>
<proteinExistence type="inferred from homology"/>
<keyword id="KW-0963">Cytoplasm</keyword>
<keyword id="KW-0342">GTP-binding</keyword>
<keyword id="KW-0396">Initiation factor</keyword>
<keyword id="KW-0547">Nucleotide-binding</keyword>
<keyword id="KW-0648">Protein biosynthesis</keyword>
<comment type="function">
    <text evidence="2">One of the essential components for the initiation of protein synthesis. Protects formylmethionyl-tRNA from spontaneous hydrolysis and promotes its binding to the 30S ribosomal subunits. Also involved in the hydrolysis of GTP during the formation of the 70S ribosomal complex.</text>
</comment>
<comment type="subcellular location">
    <subcellularLocation>
        <location evidence="2">Cytoplasm</location>
    </subcellularLocation>
</comment>
<comment type="similarity">
    <text evidence="2">Belongs to the TRAFAC class translation factor GTPase superfamily. Classic translation factor GTPase family. IF-2 subfamily.</text>
</comment>
<protein>
    <recommendedName>
        <fullName evidence="2">Translation initiation factor IF-2</fullName>
    </recommendedName>
</protein>
<gene>
    <name evidence="2" type="primary">infB</name>
    <name type="ordered locus">BUAPTUC7_371</name>
</gene>
<name>IF2_BUCAT</name>
<dbReference type="EMBL" id="CP001158">
    <property type="protein sequence ID" value="ACL30179.1"/>
    <property type="molecule type" value="Genomic_DNA"/>
</dbReference>
<dbReference type="RefSeq" id="WP_012619527.1">
    <property type="nucleotide sequence ID" value="NC_011834.1"/>
</dbReference>
<dbReference type="SMR" id="B8D7R4"/>
<dbReference type="KEGG" id="bau:BUAPTUC7_371"/>
<dbReference type="HOGENOM" id="CLU_006301_6_3_6"/>
<dbReference type="GO" id="GO:0005829">
    <property type="term" value="C:cytosol"/>
    <property type="evidence" value="ECO:0007669"/>
    <property type="project" value="TreeGrafter"/>
</dbReference>
<dbReference type="GO" id="GO:0005525">
    <property type="term" value="F:GTP binding"/>
    <property type="evidence" value="ECO:0007669"/>
    <property type="project" value="UniProtKB-KW"/>
</dbReference>
<dbReference type="GO" id="GO:0003924">
    <property type="term" value="F:GTPase activity"/>
    <property type="evidence" value="ECO:0007669"/>
    <property type="project" value="UniProtKB-UniRule"/>
</dbReference>
<dbReference type="GO" id="GO:0097216">
    <property type="term" value="F:guanosine tetraphosphate binding"/>
    <property type="evidence" value="ECO:0007669"/>
    <property type="project" value="UniProtKB-ARBA"/>
</dbReference>
<dbReference type="GO" id="GO:0003743">
    <property type="term" value="F:translation initiation factor activity"/>
    <property type="evidence" value="ECO:0007669"/>
    <property type="project" value="UniProtKB-UniRule"/>
</dbReference>
<dbReference type="CDD" id="cd01887">
    <property type="entry name" value="IF2_eIF5B"/>
    <property type="match status" value="1"/>
</dbReference>
<dbReference type="CDD" id="cd03702">
    <property type="entry name" value="IF2_mtIF2_II"/>
    <property type="match status" value="1"/>
</dbReference>
<dbReference type="CDD" id="cd03692">
    <property type="entry name" value="mtIF2_IVc"/>
    <property type="match status" value="1"/>
</dbReference>
<dbReference type="FunFam" id="2.40.30.10:FF:000007">
    <property type="entry name" value="Translation initiation factor IF-2"/>
    <property type="match status" value="1"/>
</dbReference>
<dbReference type="FunFam" id="2.40.30.10:FF:000008">
    <property type="entry name" value="Translation initiation factor IF-2"/>
    <property type="match status" value="1"/>
</dbReference>
<dbReference type="FunFam" id="3.40.50.10050:FF:000001">
    <property type="entry name" value="Translation initiation factor IF-2"/>
    <property type="match status" value="1"/>
</dbReference>
<dbReference type="FunFam" id="3.40.50.300:FF:000019">
    <property type="entry name" value="Translation initiation factor IF-2"/>
    <property type="match status" value="1"/>
</dbReference>
<dbReference type="Gene3D" id="3.40.50.300">
    <property type="entry name" value="P-loop containing nucleotide triphosphate hydrolases"/>
    <property type="match status" value="1"/>
</dbReference>
<dbReference type="Gene3D" id="3.30.56.50">
    <property type="entry name" value="Putative DNA-binding domain, N-terminal subdomain of bacterial translation initiation factor IF2"/>
    <property type="match status" value="1"/>
</dbReference>
<dbReference type="Gene3D" id="2.40.30.10">
    <property type="entry name" value="Translation factors"/>
    <property type="match status" value="2"/>
</dbReference>
<dbReference type="Gene3D" id="3.40.50.10050">
    <property type="entry name" value="Translation initiation factor IF- 2, domain 3"/>
    <property type="match status" value="1"/>
</dbReference>
<dbReference type="HAMAP" id="MF_00100_B">
    <property type="entry name" value="IF_2_B"/>
    <property type="match status" value="1"/>
</dbReference>
<dbReference type="InterPro" id="IPR009061">
    <property type="entry name" value="DNA-bd_dom_put_sf"/>
</dbReference>
<dbReference type="InterPro" id="IPR053905">
    <property type="entry name" value="EF-G-like_DII"/>
</dbReference>
<dbReference type="InterPro" id="IPR004161">
    <property type="entry name" value="EFTu-like_2"/>
</dbReference>
<dbReference type="InterPro" id="IPR013575">
    <property type="entry name" value="IF2_assoc_dom_bac"/>
</dbReference>
<dbReference type="InterPro" id="IPR044145">
    <property type="entry name" value="IF2_II"/>
</dbReference>
<dbReference type="InterPro" id="IPR006847">
    <property type="entry name" value="IF2_N"/>
</dbReference>
<dbReference type="InterPro" id="IPR027417">
    <property type="entry name" value="P-loop_NTPase"/>
</dbReference>
<dbReference type="InterPro" id="IPR005225">
    <property type="entry name" value="Small_GTP-bd"/>
</dbReference>
<dbReference type="InterPro" id="IPR000795">
    <property type="entry name" value="T_Tr_GTP-bd_dom"/>
</dbReference>
<dbReference type="InterPro" id="IPR000178">
    <property type="entry name" value="TF_IF2_bacterial-like"/>
</dbReference>
<dbReference type="InterPro" id="IPR015760">
    <property type="entry name" value="TIF_IF2"/>
</dbReference>
<dbReference type="InterPro" id="IPR023115">
    <property type="entry name" value="TIF_IF2_dom3"/>
</dbReference>
<dbReference type="InterPro" id="IPR036925">
    <property type="entry name" value="TIF_IF2_dom3_sf"/>
</dbReference>
<dbReference type="InterPro" id="IPR009000">
    <property type="entry name" value="Transl_B-barrel_sf"/>
</dbReference>
<dbReference type="NCBIfam" id="TIGR00487">
    <property type="entry name" value="IF-2"/>
    <property type="match status" value="1"/>
</dbReference>
<dbReference type="NCBIfam" id="TIGR00231">
    <property type="entry name" value="small_GTP"/>
    <property type="match status" value="1"/>
</dbReference>
<dbReference type="PANTHER" id="PTHR43381:SF5">
    <property type="entry name" value="TR-TYPE G DOMAIN-CONTAINING PROTEIN"/>
    <property type="match status" value="1"/>
</dbReference>
<dbReference type="PANTHER" id="PTHR43381">
    <property type="entry name" value="TRANSLATION INITIATION FACTOR IF-2-RELATED"/>
    <property type="match status" value="1"/>
</dbReference>
<dbReference type="Pfam" id="PF22042">
    <property type="entry name" value="EF-G_D2"/>
    <property type="match status" value="1"/>
</dbReference>
<dbReference type="Pfam" id="PF00009">
    <property type="entry name" value="GTP_EFTU"/>
    <property type="match status" value="1"/>
</dbReference>
<dbReference type="Pfam" id="PF03144">
    <property type="entry name" value="GTP_EFTU_D2"/>
    <property type="match status" value="1"/>
</dbReference>
<dbReference type="Pfam" id="PF11987">
    <property type="entry name" value="IF-2"/>
    <property type="match status" value="1"/>
</dbReference>
<dbReference type="Pfam" id="PF08364">
    <property type="entry name" value="IF2_assoc"/>
    <property type="match status" value="1"/>
</dbReference>
<dbReference type="Pfam" id="PF04760">
    <property type="entry name" value="IF2_N"/>
    <property type="match status" value="1"/>
</dbReference>
<dbReference type="SUPFAM" id="SSF52156">
    <property type="entry name" value="Initiation factor IF2/eIF5b, domain 3"/>
    <property type="match status" value="1"/>
</dbReference>
<dbReference type="SUPFAM" id="SSF52540">
    <property type="entry name" value="P-loop containing nucleoside triphosphate hydrolases"/>
    <property type="match status" value="1"/>
</dbReference>
<dbReference type="SUPFAM" id="SSF46955">
    <property type="entry name" value="Putative DNA-binding domain"/>
    <property type="match status" value="1"/>
</dbReference>
<dbReference type="SUPFAM" id="SSF50447">
    <property type="entry name" value="Translation proteins"/>
    <property type="match status" value="2"/>
</dbReference>
<dbReference type="PROSITE" id="PS51722">
    <property type="entry name" value="G_TR_2"/>
    <property type="match status" value="1"/>
</dbReference>
<dbReference type="PROSITE" id="PS01176">
    <property type="entry name" value="IF2"/>
    <property type="match status" value="1"/>
</dbReference>
<sequence length="864" mass="97504">MPDISLKVLSNEIKISIQELIKELSIIGITKTEDNYINVLEKNILLKHLESKKKYSLDTLVLQRKTRSTLRISTVGGKNKSVQVEVRKKRAYVKNNKFENESFLNEKKVIKHSMQKTSSLKNKEKKYIKNIEKIELNKSDSRSLNTKKENKLKISNKDEQNKKFNQHRESNSFDLNHKKRIKENKDIRISHKEEKQDYHLTTFLHARQAEDENDREVEIDKRNHGRILKNYRQKKNNKNFHNGRYNKEEIRTFNRNKKNSKQKNKPILLQQVFQKPESIINRDVIISNTITVSDLANKMAIKSSEVIKNMMNMGIIGTINHVLDQDTAQLIAEEMGHKVIVHRENALEELIMKDRDTGNDVSAIRAPVVTIMGHVDHGKTSLLDYIRSTKTAFYEAGGITQNIGAYHVKTDLGSITFLDTPGHSAFTAMRSRGVQITDIVILVVAADDGVMPQTIEAIQHAKEANVPVIVAINKIDKTDSDIDKVRNDLMKYNILSEEWGGENIFVSVSAKTGKGINKLLNVILLQAEMLELKAVTTGMAEGIVVESFLDKGRGPIATVLVKKGQLKKGDVILCGFEYGRIKSLRDASGNEVFSAGPSIPVEVLGLSKVPFSGDVVTVVRDEKKAREVASYRKEKSREKKLSNQNRINLENMFDDINKNNVSELKIILKSDVQGSLEAISGALLKLSTEEVKIKIIGLGIGGITETDASLALASNAIILGFNVRADTSAKKIINSEHLDLRYYSVIYDLLDEVKAAMTGLLSPEYKENIIGLAEVRNTFKSPKFGLIAGCMVTEGVIKRSNPIHILRNNIVIYEGELESLRRFKEDVNEIRNGLECGIGIKNYNDIRVGDIIEVFEVREMKRIL</sequence>